<sequence>MTLKVAVQMDPIARINIRGDSTFALLLEAQARGHAISYFTPDKLSLRGNDVVASVQSLKVRDQEGDHFTLGEPARVDMRSYDVVLLRQDPPFDLAYITSTHLLERIHPATLVVNNPASVRNAPEKLFVMDFTELMPPTLISRDKDEINAFRAEHGAVVMKPLHGHGGAAVFRVLPQDINFGSLYDMFAVTFREPWVIQRFLPEVKHGDKRIILVDGEFAGAVNRVPAEDDLRSNMVRGGAAAATELSPREREICATLGPKLRERGLLFVGIDVIDGYLTEINVTSPTGIRAVARLGGPDIAAKIWDVIEAKRA</sequence>
<keyword id="KW-0067">ATP-binding</keyword>
<keyword id="KW-0317">Glutathione biosynthesis</keyword>
<keyword id="KW-0436">Ligase</keyword>
<keyword id="KW-0460">Magnesium</keyword>
<keyword id="KW-0464">Manganese</keyword>
<keyword id="KW-0479">Metal-binding</keyword>
<keyword id="KW-0547">Nucleotide-binding</keyword>
<accession>P61396</accession>
<comment type="catalytic activity">
    <reaction evidence="2">
        <text>gamma-L-glutamyl-L-cysteine + glycine + ATP = glutathione + ADP + phosphate + H(+)</text>
        <dbReference type="Rhea" id="RHEA:13557"/>
        <dbReference type="ChEBI" id="CHEBI:15378"/>
        <dbReference type="ChEBI" id="CHEBI:30616"/>
        <dbReference type="ChEBI" id="CHEBI:43474"/>
        <dbReference type="ChEBI" id="CHEBI:57305"/>
        <dbReference type="ChEBI" id="CHEBI:57925"/>
        <dbReference type="ChEBI" id="CHEBI:58173"/>
        <dbReference type="ChEBI" id="CHEBI:456216"/>
        <dbReference type="EC" id="6.3.2.3"/>
    </reaction>
</comment>
<comment type="cofactor">
    <cofactor evidence="1">
        <name>Mg(2+)</name>
        <dbReference type="ChEBI" id="CHEBI:18420"/>
    </cofactor>
    <cofactor evidence="1">
        <name>Mn(2+)</name>
        <dbReference type="ChEBI" id="CHEBI:29035"/>
    </cofactor>
    <text evidence="1">Binds 1 Mg(2+) or Mn(2+) ion per subunit.</text>
</comment>
<comment type="pathway">
    <text evidence="2">Sulfur metabolism; glutathione biosynthesis; glutathione from L-cysteine and L-glutamate: step 2/2.</text>
</comment>
<comment type="similarity">
    <text evidence="2">Belongs to the prokaryotic GSH synthase family.</text>
</comment>
<protein>
    <recommendedName>
        <fullName evidence="2">Glutathione synthetase</fullName>
        <ecNumber evidence="2">6.3.2.3</ecNumber>
    </recommendedName>
    <alternativeName>
        <fullName evidence="2">GSH synthetase</fullName>
        <shortName evidence="2">GSH-S</shortName>
        <shortName evidence="2">GSHase</shortName>
    </alternativeName>
    <alternativeName>
        <fullName evidence="2">Glutathione synthase</fullName>
    </alternativeName>
</protein>
<evidence type="ECO:0000250" key="1"/>
<evidence type="ECO:0000255" key="2">
    <source>
        <dbReference type="HAMAP-Rule" id="MF_00162"/>
    </source>
</evidence>
<dbReference type="EC" id="6.3.2.3" evidence="2"/>
<dbReference type="EMBL" id="BX572594">
    <property type="protein sequence ID" value="CAE25766.1"/>
    <property type="molecule type" value="Genomic_DNA"/>
</dbReference>
<dbReference type="RefSeq" id="WP_011155890.1">
    <property type="nucleotide sequence ID" value="NZ_CP116810.1"/>
</dbReference>
<dbReference type="SMR" id="P61396"/>
<dbReference type="STRING" id="258594.RPA0322"/>
<dbReference type="GeneID" id="66891332"/>
<dbReference type="eggNOG" id="COG0189">
    <property type="taxonomic scope" value="Bacteria"/>
</dbReference>
<dbReference type="HOGENOM" id="CLU_068239_0_0_5"/>
<dbReference type="PhylomeDB" id="P61396"/>
<dbReference type="UniPathway" id="UPA00142">
    <property type="reaction ID" value="UER00210"/>
</dbReference>
<dbReference type="GO" id="GO:0005737">
    <property type="term" value="C:cytoplasm"/>
    <property type="evidence" value="ECO:0007669"/>
    <property type="project" value="TreeGrafter"/>
</dbReference>
<dbReference type="GO" id="GO:0005524">
    <property type="term" value="F:ATP binding"/>
    <property type="evidence" value="ECO:0007669"/>
    <property type="project" value="UniProtKB-UniRule"/>
</dbReference>
<dbReference type="GO" id="GO:0004363">
    <property type="term" value="F:glutathione synthase activity"/>
    <property type="evidence" value="ECO:0007669"/>
    <property type="project" value="UniProtKB-UniRule"/>
</dbReference>
<dbReference type="GO" id="GO:0046872">
    <property type="term" value="F:metal ion binding"/>
    <property type="evidence" value="ECO:0007669"/>
    <property type="project" value="UniProtKB-KW"/>
</dbReference>
<dbReference type="FunFam" id="3.30.1490.20:FF:000009">
    <property type="entry name" value="Glutathione synthetase"/>
    <property type="match status" value="1"/>
</dbReference>
<dbReference type="Gene3D" id="3.40.50.20">
    <property type="match status" value="1"/>
</dbReference>
<dbReference type="Gene3D" id="3.30.1490.20">
    <property type="entry name" value="ATP-grasp fold, A domain"/>
    <property type="match status" value="1"/>
</dbReference>
<dbReference type="Gene3D" id="3.30.470.20">
    <property type="entry name" value="ATP-grasp fold, B domain"/>
    <property type="match status" value="1"/>
</dbReference>
<dbReference type="HAMAP" id="MF_00162">
    <property type="entry name" value="GSH_S"/>
    <property type="match status" value="1"/>
</dbReference>
<dbReference type="InterPro" id="IPR011761">
    <property type="entry name" value="ATP-grasp"/>
</dbReference>
<dbReference type="InterPro" id="IPR013815">
    <property type="entry name" value="ATP_grasp_subdomain_1"/>
</dbReference>
<dbReference type="InterPro" id="IPR006284">
    <property type="entry name" value="Glut_synth_pro"/>
</dbReference>
<dbReference type="InterPro" id="IPR004218">
    <property type="entry name" value="GSHS_ATP-bd"/>
</dbReference>
<dbReference type="InterPro" id="IPR004215">
    <property type="entry name" value="GSHS_N"/>
</dbReference>
<dbReference type="InterPro" id="IPR016185">
    <property type="entry name" value="PreATP-grasp_dom_sf"/>
</dbReference>
<dbReference type="NCBIfam" id="TIGR01380">
    <property type="entry name" value="glut_syn"/>
    <property type="match status" value="1"/>
</dbReference>
<dbReference type="NCBIfam" id="NF003573">
    <property type="entry name" value="PRK05246.1"/>
    <property type="match status" value="1"/>
</dbReference>
<dbReference type="PANTHER" id="PTHR21621:SF4">
    <property type="entry name" value="GLUTATHIONE SYNTHETASE"/>
    <property type="match status" value="1"/>
</dbReference>
<dbReference type="PANTHER" id="PTHR21621">
    <property type="entry name" value="RIBOSOMAL PROTEIN S6 MODIFICATION PROTEIN"/>
    <property type="match status" value="1"/>
</dbReference>
<dbReference type="Pfam" id="PF02955">
    <property type="entry name" value="GSH-S_ATP"/>
    <property type="match status" value="1"/>
</dbReference>
<dbReference type="Pfam" id="PF02951">
    <property type="entry name" value="GSH-S_N"/>
    <property type="match status" value="1"/>
</dbReference>
<dbReference type="SUPFAM" id="SSF56059">
    <property type="entry name" value="Glutathione synthetase ATP-binding domain-like"/>
    <property type="match status" value="1"/>
</dbReference>
<dbReference type="SUPFAM" id="SSF52440">
    <property type="entry name" value="PreATP-grasp domain"/>
    <property type="match status" value="1"/>
</dbReference>
<dbReference type="PROSITE" id="PS50975">
    <property type="entry name" value="ATP_GRASP"/>
    <property type="match status" value="1"/>
</dbReference>
<feature type="chain" id="PRO_0000197482" description="Glutathione synthetase">
    <location>
        <begin position="1"/>
        <end position="313"/>
    </location>
</feature>
<feature type="domain" description="ATP-grasp" evidence="2">
    <location>
        <begin position="125"/>
        <end position="309"/>
    </location>
</feature>
<feature type="binding site" evidence="2">
    <location>
        <begin position="151"/>
        <end position="207"/>
    </location>
    <ligand>
        <name>ATP</name>
        <dbReference type="ChEBI" id="CHEBI:30616"/>
    </ligand>
</feature>
<feature type="binding site" evidence="2">
    <location>
        <position position="280"/>
    </location>
    <ligand>
        <name>Mg(2+)</name>
        <dbReference type="ChEBI" id="CHEBI:18420"/>
    </ligand>
</feature>
<feature type="binding site" evidence="2">
    <location>
        <position position="282"/>
    </location>
    <ligand>
        <name>Mg(2+)</name>
        <dbReference type="ChEBI" id="CHEBI:18420"/>
    </ligand>
</feature>
<reference key="1">
    <citation type="journal article" date="2004" name="Nat. Biotechnol.">
        <title>Complete genome sequence of the metabolically versatile photosynthetic bacterium Rhodopseudomonas palustris.</title>
        <authorList>
            <person name="Larimer F.W."/>
            <person name="Chain P."/>
            <person name="Hauser L."/>
            <person name="Lamerdin J.E."/>
            <person name="Malfatti S."/>
            <person name="Do L."/>
            <person name="Land M.L."/>
            <person name="Pelletier D.A."/>
            <person name="Beatty J.T."/>
            <person name="Lang A.S."/>
            <person name="Tabita F.R."/>
            <person name="Gibson J.L."/>
            <person name="Hanson T.E."/>
            <person name="Bobst C."/>
            <person name="Torres y Torres J.L."/>
            <person name="Peres C."/>
            <person name="Harrison F.H."/>
            <person name="Gibson J."/>
            <person name="Harwood C.S."/>
        </authorList>
    </citation>
    <scope>NUCLEOTIDE SEQUENCE [LARGE SCALE GENOMIC DNA]</scope>
    <source>
        <strain>ATCC BAA-98 / CGA009</strain>
    </source>
</reference>
<gene>
    <name evidence="2" type="primary">gshB</name>
    <name type="ordered locus">RPA0322</name>
</gene>
<organism>
    <name type="scientific">Rhodopseudomonas palustris (strain ATCC BAA-98 / CGA009)</name>
    <dbReference type="NCBI Taxonomy" id="258594"/>
    <lineage>
        <taxon>Bacteria</taxon>
        <taxon>Pseudomonadati</taxon>
        <taxon>Pseudomonadota</taxon>
        <taxon>Alphaproteobacteria</taxon>
        <taxon>Hyphomicrobiales</taxon>
        <taxon>Nitrobacteraceae</taxon>
        <taxon>Rhodopseudomonas</taxon>
    </lineage>
</organism>
<proteinExistence type="inferred from homology"/>
<name>GSHB_RHOPA</name>